<feature type="chain" id="PRO_1000196446" description="Small ribosomal subunit protein bS16">
    <location>
        <begin position="1"/>
        <end position="86"/>
    </location>
</feature>
<protein>
    <recommendedName>
        <fullName evidence="1">Small ribosomal subunit protein bS16</fullName>
    </recommendedName>
    <alternativeName>
        <fullName evidence="2">30S ribosomal protein S16</fullName>
    </alternativeName>
</protein>
<keyword id="KW-1185">Reference proteome</keyword>
<keyword id="KW-0687">Ribonucleoprotein</keyword>
<keyword id="KW-0689">Ribosomal protein</keyword>
<dbReference type="EMBL" id="CP001037">
    <property type="protein sequence ID" value="ACC81391.1"/>
    <property type="molecule type" value="Genomic_DNA"/>
</dbReference>
<dbReference type="RefSeq" id="WP_012409382.1">
    <property type="nucleotide sequence ID" value="NC_010628.1"/>
</dbReference>
<dbReference type="SMR" id="B2IVK6"/>
<dbReference type="STRING" id="63737.Npun_F2858"/>
<dbReference type="EnsemblBacteria" id="ACC81391">
    <property type="protein sequence ID" value="ACC81391"/>
    <property type="gene ID" value="Npun_F2858"/>
</dbReference>
<dbReference type="KEGG" id="npu:Npun_F2858"/>
<dbReference type="eggNOG" id="COG0228">
    <property type="taxonomic scope" value="Bacteria"/>
</dbReference>
<dbReference type="HOGENOM" id="CLU_100590_5_2_3"/>
<dbReference type="OrthoDB" id="9807878at2"/>
<dbReference type="PhylomeDB" id="B2IVK6"/>
<dbReference type="Proteomes" id="UP000001191">
    <property type="component" value="Chromosome"/>
</dbReference>
<dbReference type="GO" id="GO:0005737">
    <property type="term" value="C:cytoplasm"/>
    <property type="evidence" value="ECO:0007669"/>
    <property type="project" value="UniProtKB-ARBA"/>
</dbReference>
<dbReference type="GO" id="GO:0015935">
    <property type="term" value="C:small ribosomal subunit"/>
    <property type="evidence" value="ECO:0007669"/>
    <property type="project" value="TreeGrafter"/>
</dbReference>
<dbReference type="GO" id="GO:0003735">
    <property type="term" value="F:structural constituent of ribosome"/>
    <property type="evidence" value="ECO:0007669"/>
    <property type="project" value="InterPro"/>
</dbReference>
<dbReference type="GO" id="GO:0006412">
    <property type="term" value="P:translation"/>
    <property type="evidence" value="ECO:0007669"/>
    <property type="project" value="UniProtKB-UniRule"/>
</dbReference>
<dbReference type="Gene3D" id="3.30.1320.10">
    <property type="match status" value="1"/>
</dbReference>
<dbReference type="HAMAP" id="MF_00385">
    <property type="entry name" value="Ribosomal_bS16"/>
    <property type="match status" value="1"/>
</dbReference>
<dbReference type="InterPro" id="IPR000307">
    <property type="entry name" value="Ribosomal_bS16"/>
</dbReference>
<dbReference type="InterPro" id="IPR020592">
    <property type="entry name" value="Ribosomal_bS16_CS"/>
</dbReference>
<dbReference type="InterPro" id="IPR023803">
    <property type="entry name" value="Ribosomal_bS16_dom_sf"/>
</dbReference>
<dbReference type="NCBIfam" id="TIGR00002">
    <property type="entry name" value="S16"/>
    <property type="match status" value="1"/>
</dbReference>
<dbReference type="PANTHER" id="PTHR12919">
    <property type="entry name" value="30S RIBOSOMAL PROTEIN S16"/>
    <property type="match status" value="1"/>
</dbReference>
<dbReference type="PANTHER" id="PTHR12919:SF20">
    <property type="entry name" value="SMALL RIBOSOMAL SUBUNIT PROTEIN BS16M"/>
    <property type="match status" value="1"/>
</dbReference>
<dbReference type="Pfam" id="PF00886">
    <property type="entry name" value="Ribosomal_S16"/>
    <property type="match status" value="1"/>
</dbReference>
<dbReference type="SUPFAM" id="SSF54565">
    <property type="entry name" value="Ribosomal protein S16"/>
    <property type="match status" value="1"/>
</dbReference>
<dbReference type="PROSITE" id="PS00732">
    <property type="entry name" value="RIBOSOMAL_S16"/>
    <property type="match status" value="1"/>
</dbReference>
<organism>
    <name type="scientific">Nostoc punctiforme (strain ATCC 29133 / PCC 73102)</name>
    <dbReference type="NCBI Taxonomy" id="63737"/>
    <lineage>
        <taxon>Bacteria</taxon>
        <taxon>Bacillati</taxon>
        <taxon>Cyanobacteriota</taxon>
        <taxon>Cyanophyceae</taxon>
        <taxon>Nostocales</taxon>
        <taxon>Nostocaceae</taxon>
        <taxon>Nostoc</taxon>
    </lineage>
</organism>
<evidence type="ECO:0000255" key="1">
    <source>
        <dbReference type="HAMAP-Rule" id="MF_00385"/>
    </source>
</evidence>
<evidence type="ECO:0000305" key="2"/>
<reference key="1">
    <citation type="journal article" date="2013" name="Plant Physiol.">
        <title>A Nostoc punctiforme Sugar Transporter Necessary to Establish a Cyanobacterium-Plant Symbiosis.</title>
        <authorList>
            <person name="Ekman M."/>
            <person name="Picossi S."/>
            <person name="Campbell E.L."/>
            <person name="Meeks J.C."/>
            <person name="Flores E."/>
        </authorList>
    </citation>
    <scope>NUCLEOTIDE SEQUENCE [LARGE SCALE GENOMIC DNA]</scope>
    <source>
        <strain>ATCC 29133 / PCC 73102</strain>
    </source>
</reference>
<name>RS16_NOSP7</name>
<accession>B2IVK6</accession>
<gene>
    <name evidence="1" type="primary">rpsP</name>
    <name evidence="1" type="synonym">rps16</name>
    <name type="ordered locus">Npun_F2858</name>
</gene>
<comment type="similarity">
    <text evidence="1">Belongs to the bacterial ribosomal protein bS16 family.</text>
</comment>
<proteinExistence type="inferred from homology"/>
<sequence length="86" mass="9807">MIKLRLKRFGKKREASYRIVAINNLARRDGRPLEELGFYNPRTDEVRLDVPGIVKRLQQGAQPTDTVRRILVKANVFEQVSATAAS</sequence>